<comment type="function">
    <text evidence="1">Regulator of short-term neuronal synaptic plasticity in the dentate gyrus. Associates with AMPA receptors (ionotropic glutamate receptors) in synaptic spines and promotes AMPA receptor desensitization at excitatory synapses (By similarity).</text>
</comment>
<comment type="subunit">
    <text evidence="1">Component of some AMPA receptors (ionotropic glutamate receptors) complex.</text>
</comment>
<comment type="subcellular location">
    <subcellularLocation>
        <location evidence="1">Cell projection</location>
        <location evidence="1">Dendritic spine membrane</location>
        <topology evidence="1">Single-pass type I membrane protein</topology>
    </subcellularLocation>
    <subcellularLocation>
        <location evidence="1">Synapse</location>
    </subcellularLocation>
</comment>
<comment type="similarity">
    <text evidence="4">Belongs to the shisa family. SHISA9 subfamily.</text>
</comment>
<comment type="sequence caution" evidence="4">
    <conflict type="erroneous initiation">
        <sequence resource="EMBL-CDS" id="AAI53965"/>
    </conflict>
    <text>Extended N-terminus.</text>
</comment>
<proteinExistence type="evidence at transcript level"/>
<dbReference type="EMBL" id="BC153964">
    <property type="protein sequence ID" value="AAI53965.1"/>
    <property type="status" value="ALT_INIT"/>
    <property type="molecule type" value="mRNA"/>
</dbReference>
<dbReference type="EMBL" id="BC162913">
    <property type="protein sequence ID" value="AAI62913.1"/>
    <property type="molecule type" value="mRNA"/>
</dbReference>
<dbReference type="EMBL" id="BC162933">
    <property type="protein sequence ID" value="AAI62933.1"/>
    <property type="molecule type" value="mRNA"/>
</dbReference>
<dbReference type="RefSeq" id="NP_001129447.2">
    <property type="nucleotide sequence ID" value="NM_001135975.2"/>
</dbReference>
<dbReference type="SMR" id="B3DHW5"/>
<dbReference type="FunCoup" id="B3DHW5">
    <property type="interactions" value="560"/>
</dbReference>
<dbReference type="STRING" id="7955.ENSDARP00000069025"/>
<dbReference type="GlyCosmos" id="B3DHW5">
    <property type="glycosylation" value="1 site, No reported glycans"/>
</dbReference>
<dbReference type="PaxDb" id="7955-ENSDARP00000069025"/>
<dbReference type="GeneID" id="566015"/>
<dbReference type="KEGG" id="dre:566015"/>
<dbReference type="AGR" id="ZFIN:ZDB-GENE-081022-105"/>
<dbReference type="CTD" id="566015"/>
<dbReference type="ZFIN" id="ZDB-GENE-081022-105">
    <property type="gene designation" value="shisa9b"/>
</dbReference>
<dbReference type="eggNOG" id="ENOG502QT2A">
    <property type="taxonomic scope" value="Eukaryota"/>
</dbReference>
<dbReference type="InParanoid" id="B3DHW5"/>
<dbReference type="OrthoDB" id="9935471at2759"/>
<dbReference type="PhylomeDB" id="B3DHW5"/>
<dbReference type="PRO" id="PR:B3DHW5"/>
<dbReference type="Proteomes" id="UP000000437">
    <property type="component" value="Chromosome 3"/>
</dbReference>
<dbReference type="GO" id="GO:0032281">
    <property type="term" value="C:AMPA glutamate receptor complex"/>
    <property type="evidence" value="ECO:0000318"/>
    <property type="project" value="GO_Central"/>
</dbReference>
<dbReference type="GO" id="GO:0032591">
    <property type="term" value="C:dendritic spine membrane"/>
    <property type="evidence" value="ECO:0000250"/>
    <property type="project" value="UniProtKB"/>
</dbReference>
<dbReference type="GO" id="GO:0008328">
    <property type="term" value="C:ionotropic glutamate receptor complex"/>
    <property type="evidence" value="ECO:0000250"/>
    <property type="project" value="UniProtKB"/>
</dbReference>
<dbReference type="GO" id="GO:0014069">
    <property type="term" value="C:postsynaptic density"/>
    <property type="evidence" value="ECO:0000318"/>
    <property type="project" value="GO_Central"/>
</dbReference>
<dbReference type="GO" id="GO:0045211">
    <property type="term" value="C:postsynaptic membrane"/>
    <property type="evidence" value="ECO:0000318"/>
    <property type="project" value="GO_Central"/>
</dbReference>
<dbReference type="GO" id="GO:0045202">
    <property type="term" value="C:synapse"/>
    <property type="evidence" value="ECO:0000250"/>
    <property type="project" value="UniProtKB"/>
</dbReference>
<dbReference type="GO" id="GO:0048172">
    <property type="term" value="P:regulation of short-term neuronal synaptic plasticity"/>
    <property type="evidence" value="ECO:0000250"/>
    <property type="project" value="UniProtKB"/>
</dbReference>
<dbReference type="InterPro" id="IPR026910">
    <property type="entry name" value="Shisa"/>
</dbReference>
<dbReference type="InterPro" id="IPR053891">
    <property type="entry name" value="Shisa_N"/>
</dbReference>
<dbReference type="PANTHER" id="PTHR31774:SF1">
    <property type="entry name" value="PROTEIN SHISA-9"/>
    <property type="match status" value="1"/>
</dbReference>
<dbReference type="PANTHER" id="PTHR31774">
    <property type="entry name" value="PROTEIN SHISA-9-RELATED"/>
    <property type="match status" value="1"/>
</dbReference>
<dbReference type="Pfam" id="PF13908">
    <property type="entry name" value="Shisa_N"/>
    <property type="match status" value="1"/>
</dbReference>
<evidence type="ECO:0000250" key="1"/>
<evidence type="ECO:0000255" key="2"/>
<evidence type="ECO:0000256" key="3">
    <source>
        <dbReference type="SAM" id="MobiDB-lite"/>
    </source>
</evidence>
<evidence type="ECO:0000305" key="4"/>
<gene>
    <name type="primary">shisa9b</name>
</gene>
<keyword id="KW-1003">Cell membrane</keyword>
<keyword id="KW-0966">Cell projection</keyword>
<keyword id="KW-0325">Glycoprotein</keyword>
<keyword id="KW-0472">Membrane</keyword>
<keyword id="KW-0628">Postsynaptic cell membrane</keyword>
<keyword id="KW-1185">Reference proteome</keyword>
<keyword id="KW-0732">Signal</keyword>
<keyword id="KW-0770">Synapse</keyword>
<keyword id="KW-0812">Transmembrane</keyword>
<keyword id="KW-1133">Transmembrane helix</keyword>
<name>SHA9B_DANRE</name>
<reference key="1">
    <citation type="submission" date="2008-04" db="EMBL/GenBank/DDBJ databases">
        <authorList>
            <consortium name="NIH - Zebrafish Gene Collection (ZGC) project"/>
        </authorList>
    </citation>
    <scope>NUCLEOTIDE SEQUENCE [LARGE SCALE MRNA]</scope>
    <source>
        <tissue>Brain</tissue>
    </source>
</reference>
<protein>
    <recommendedName>
        <fullName>Protein shisa-9B</fullName>
    </recommendedName>
</protein>
<organism>
    <name type="scientific">Danio rerio</name>
    <name type="common">Zebrafish</name>
    <name type="synonym">Brachydanio rerio</name>
    <dbReference type="NCBI Taxonomy" id="7955"/>
    <lineage>
        <taxon>Eukaryota</taxon>
        <taxon>Metazoa</taxon>
        <taxon>Chordata</taxon>
        <taxon>Craniata</taxon>
        <taxon>Vertebrata</taxon>
        <taxon>Euteleostomi</taxon>
        <taxon>Actinopterygii</taxon>
        <taxon>Neopterygii</taxon>
        <taxon>Teleostei</taxon>
        <taxon>Ostariophysi</taxon>
        <taxon>Cypriniformes</taxon>
        <taxon>Danionidae</taxon>
        <taxon>Danioninae</taxon>
        <taxon>Danio</taxon>
    </lineage>
</organism>
<feature type="signal peptide" evidence="2">
    <location>
        <begin position="1"/>
        <end position="20"/>
    </location>
</feature>
<feature type="chain" id="PRO_0000394256" description="Protein shisa-9B">
    <location>
        <begin position="21"/>
        <end position="393"/>
    </location>
</feature>
<feature type="topological domain" description="Extracellular" evidence="2">
    <location>
        <begin position="21"/>
        <end position="131"/>
    </location>
</feature>
<feature type="transmembrane region" description="Helical" evidence="2">
    <location>
        <begin position="132"/>
        <end position="152"/>
    </location>
</feature>
<feature type="topological domain" description="Cytoplasmic" evidence="2">
    <location>
        <begin position="153"/>
        <end position="393"/>
    </location>
</feature>
<feature type="region of interest" description="Disordered" evidence="3">
    <location>
        <begin position="28"/>
        <end position="52"/>
    </location>
</feature>
<feature type="region of interest" description="Disordered" evidence="3">
    <location>
        <begin position="307"/>
        <end position="340"/>
    </location>
</feature>
<feature type="compositionally biased region" description="Basic residues" evidence="3">
    <location>
        <begin position="310"/>
        <end position="321"/>
    </location>
</feature>
<feature type="glycosylation site" description="N-linked (GlcNAc...) asparagine" evidence="2">
    <location>
        <position position="38"/>
    </location>
</feature>
<feature type="sequence conflict" description="In Ref. 1; AAI53965." evidence="4" ref="1">
    <original>Q</original>
    <variation>R</variation>
    <location>
        <position position="202"/>
    </location>
</feature>
<feature type="sequence conflict" description="In Ref. 1; AAI53965." evidence="4" ref="1">
    <original>S</original>
    <variation>N</variation>
    <location>
        <position position="212"/>
    </location>
</feature>
<sequence length="393" mass="43434">MKSTGLLLGYFLMKVLVCDAEGEPGKSLDGAVTASGSNDSRDGENGLSETPHTEDRCRGYYDVMGQWDPPFVCRTGSYLYCCGTCGFRFCCEFKNSRLDQTTCKNYDTPPWSMTGRPPPKMMDQHDPTKDKTNLIVYIICGVVAIMALVGIFTKLGLEKAHRPHRENMSRALAQVMRQTAPGEHVEREESLAVHGQPYENLQARATGNNLQSAQMNSVGPSSSMMQAMTPYPALGQVPVAHPYEPSPAAKELNKYASLKAVAEKANENFYTNRRHLADLAAKGTLPMHSVSLEQEPTNPYSPELPCQKQNGHKSKSTKVHSSHPLAYGSNTIANPGRMSSWETTETLGRRHTYGPKKHSATMEQMNELTSAQSQHYLPPHPYFVTNSKTEVTV</sequence>
<accession>B3DHW5</accession>
<accession>A8KB48</accession>